<dbReference type="EMBL" id="X68147">
    <property type="protein sequence ID" value="CAA48249.1"/>
    <property type="molecule type" value="Genomic_DNA"/>
</dbReference>
<dbReference type="PIR" id="S28041">
    <property type="entry name" value="S28041"/>
</dbReference>
<dbReference type="RefSeq" id="WP_011815407.1">
    <property type="nucleotide sequence ID" value="NZ_CP009846.1"/>
</dbReference>
<dbReference type="SMR" id="P31516"/>
<dbReference type="STRING" id="1443113.LC20_04856"/>
<dbReference type="KEGG" id="yew:CH47_3142"/>
<dbReference type="GO" id="GO:0006826">
    <property type="term" value="P:iron ion transport"/>
    <property type="evidence" value="ECO:0007669"/>
    <property type="project" value="UniProtKB-KW"/>
</dbReference>
<dbReference type="Gene3D" id="2.10.70.10">
    <property type="entry name" value="Complement Module, domain 1"/>
    <property type="match status" value="1"/>
</dbReference>
<dbReference type="InterPro" id="IPR019600">
    <property type="entry name" value="Hemin_uptake_protein_HemP"/>
</dbReference>
<dbReference type="Pfam" id="PF10636">
    <property type="entry name" value="hemP"/>
    <property type="match status" value="1"/>
</dbReference>
<accession>P31516</accession>
<comment type="function">
    <text>This protein is involved in the uptake of hemin.</text>
</comment>
<comment type="similarity">
    <text evidence="2">To E.coli YdiE.</text>
</comment>
<evidence type="ECO:0000256" key="1">
    <source>
        <dbReference type="SAM" id="MobiDB-lite"/>
    </source>
</evidence>
<evidence type="ECO:0000305" key="2"/>
<name>HEMP_YEREN</name>
<proteinExistence type="predicted"/>
<gene>
    <name type="primary">hemP</name>
</gene>
<reference key="1">
    <citation type="journal article" date="1992" name="EMBO J.">
        <title>Hemin uptake system of Yersinia enterocolitica: similarities with other TonB-dependent systems in Gram-negative bacteria.</title>
        <authorList>
            <person name="Stojiljkovic I."/>
            <person name="Hantke K."/>
        </authorList>
    </citation>
    <scope>NUCLEOTIDE SEQUENCE [GENOMIC DNA]</scope>
    <source>
        <strain>ATCC 51872 / WA-C / Serotype O:8</strain>
    </source>
</reference>
<feature type="chain" id="PRO_0000083947" description="Hemin uptake protein HemP">
    <location>
        <begin position="1"/>
        <end position="81"/>
    </location>
</feature>
<feature type="region of interest" description="Disordered" evidence="1">
    <location>
        <begin position="26"/>
        <end position="46"/>
    </location>
</feature>
<organism>
    <name type="scientific">Yersinia enterocolitica</name>
    <dbReference type="NCBI Taxonomy" id="630"/>
    <lineage>
        <taxon>Bacteria</taxon>
        <taxon>Pseudomonadati</taxon>
        <taxon>Pseudomonadota</taxon>
        <taxon>Gammaproteobacteria</taxon>
        <taxon>Enterobacterales</taxon>
        <taxon>Yersiniaceae</taxon>
        <taxon>Yersinia</taxon>
    </lineage>
</organism>
<keyword id="KW-0406">Ion transport</keyword>
<keyword id="KW-0408">Iron</keyword>
<keyword id="KW-0410">Iron transport</keyword>
<keyword id="KW-0813">Transport</keyword>
<sequence length="81" mass="8953">MIDNAYHIDSGYHYLVCNMDKQLNKAPTMNDEPAAKPPAGNKPLSVSSEQLLGEHGVAFIIHQGECYQLRQTKAGKLILTK</sequence>
<protein>
    <recommendedName>
        <fullName>Hemin uptake protein HemP</fullName>
    </recommendedName>
</protein>